<gene>
    <name type="primary">ZNF259</name>
    <name type="synonym">ZPR1</name>
</gene>
<comment type="function">
    <text evidence="1">Acts as a signaling molecule that communicates proliferative growth signals from the cytoplasm to the nucleus. Plays a role for the localization and accumulation of the survival motor neuron protein SMN1 in sub-nuclear bodies, including gems and Cajal bodies. Induces neuron differentiation and stimulates axonal growth and formation of growth cone in spinal cord motor neurons. Plays a role in the splicing of cellular pre-mRNAs. May be involved in H(2)O(2)-induced neuronal cell death (By similarity).</text>
</comment>
<comment type="subunit">
    <text>Component of an import snRNP complex composed of KPNB1, SNUPN, SMN1 and ZNF259. Interacts (via C-terminal region) with SMN1 (via C-terminal region); the interaction occurs after treatment with serum. Interacts with elongation factor 1-alpha EEF1A1; the interaction occurs in a epidermal growth factor (EGF)-dependent manner. Interacts (via zinc fingers) with EGFR (via C-terminal cytoplasmic kinase domain); the interaction is negatively regulated in response to epidermal growth factor (EGF) stimulation and EGFR kinase activity. May also bind to the PDGFR receptor.</text>
</comment>
<comment type="subcellular location">
    <subcellularLocation>
        <location evidence="1">Nucleus</location>
    </subcellularLocation>
    <subcellularLocation>
        <location evidence="1">Cytoplasm</location>
    </subcellularLocation>
    <subcellularLocation>
        <location evidence="1">Nucleus</location>
        <location evidence="1">Nucleolus</location>
    </subcellularLocation>
    <subcellularLocation>
        <location evidence="1">Cytoplasm</location>
        <location evidence="1">Perinuclear region</location>
    </subcellularLocation>
    <subcellularLocation>
        <location evidence="1">Nucleus</location>
        <location evidence="1">Gem</location>
    </subcellularLocation>
    <subcellularLocation>
        <location evidence="1">Nucleus</location>
        <location evidence="1">Cajal body</location>
    </subcellularLocation>
    <subcellularLocation>
        <location evidence="1">Cell projection</location>
        <location evidence="1">Axon</location>
    </subcellularLocation>
    <subcellularLocation>
        <location evidence="1">Cell projection</location>
        <location evidence="1">Growth cone</location>
    </subcellularLocation>
    <text evidence="1">Localized predominantly in the cytoplasm in serum-starved cells growth arrested in G0 of the mitotic cell cycle. Localized both in the nucleus and cytoplasm at the G1 phase of the mitotic cell cycle. Accumulates in the subnuclear bodies during progression into the S phase of the mitotic cell cycle. Diffusely localized throughout the cell during mitosis. Colocalized with NPAT and SMN1 in nuclear bodies including gems (Gemini of coiled bodies) and Cajal bodies in a cell cycle-dependent manner. Colocalized with EGFR in the cytoplasm of quiescent cells. Translocates from the cytoplasm to the nucleus in a epidermal growth factor (EGF)-dependent manner. Translocates together with EEF1A1 from the cytoplasm to the nucleolus after treatment with mitogens. Colocalized with SMN1 in Gemini of coiled bodies (gems), Cajal bodies, axon and growth cones of neurons (By similarity).</text>
</comment>
<comment type="similarity">
    <text evidence="3">Belongs to the ZPR1 family.</text>
</comment>
<name>ZPR1_BOVIN</name>
<feature type="chain" id="PRO_0000328434" description="Zinc finger protein ZPR1">
    <location>
        <begin position="1"/>
        <end position="459"/>
    </location>
</feature>
<feature type="zinc finger region" description="C4-type 1">
    <location>
        <begin position="51"/>
        <end position="83"/>
    </location>
</feature>
<feature type="zinc finger region" description="C4-type 2">
    <location>
        <begin position="259"/>
        <end position="291"/>
    </location>
</feature>
<feature type="region of interest" description="Disordered" evidence="2">
    <location>
        <begin position="1"/>
        <end position="43"/>
    </location>
</feature>
<feature type="region of interest" description="Disordered" evidence="2">
    <location>
        <begin position="438"/>
        <end position="459"/>
    </location>
</feature>
<feature type="compositionally biased region" description="Low complexity" evidence="2">
    <location>
        <begin position="1"/>
        <end position="29"/>
    </location>
</feature>
<dbReference type="EMBL" id="BC109540">
    <property type="protein sequence ID" value="AAI09541.1"/>
    <property type="molecule type" value="mRNA"/>
</dbReference>
<dbReference type="RefSeq" id="NP_001033593.1">
    <property type="nucleotide sequence ID" value="NM_001038504.1"/>
</dbReference>
<dbReference type="SMR" id="Q2TBX0"/>
<dbReference type="FunCoup" id="Q2TBX0">
    <property type="interactions" value="4581"/>
</dbReference>
<dbReference type="STRING" id="9913.ENSBTAP00000003433"/>
<dbReference type="PaxDb" id="9913-ENSBTAP00000003433"/>
<dbReference type="Ensembl" id="ENSBTAT00000003433.6">
    <property type="protein sequence ID" value="ENSBTAP00000003433.4"/>
    <property type="gene ID" value="ENSBTAG00000002650.6"/>
</dbReference>
<dbReference type="GeneID" id="504523"/>
<dbReference type="KEGG" id="bta:504523"/>
<dbReference type="CTD" id="8882"/>
<dbReference type="VEuPathDB" id="HostDB:ENSBTAG00000002650"/>
<dbReference type="VGNC" id="VGNC:37370">
    <property type="gene designation" value="ZPR1"/>
</dbReference>
<dbReference type="eggNOG" id="KOG2703">
    <property type="taxonomic scope" value="Eukaryota"/>
</dbReference>
<dbReference type="GeneTree" id="ENSGT00390000005306"/>
<dbReference type="HOGENOM" id="CLU_024138_5_0_1"/>
<dbReference type="InParanoid" id="Q2TBX0"/>
<dbReference type="OMA" id="FREVVIM"/>
<dbReference type="OrthoDB" id="308464at2759"/>
<dbReference type="TreeFam" id="TF313084"/>
<dbReference type="Proteomes" id="UP000009136">
    <property type="component" value="Chromosome 15"/>
</dbReference>
<dbReference type="Bgee" id="ENSBTAG00000002650">
    <property type="expression patterns" value="Expressed in diaphragm and 111 other cell types or tissues"/>
</dbReference>
<dbReference type="GO" id="GO:0030424">
    <property type="term" value="C:axon"/>
    <property type="evidence" value="ECO:0000250"/>
    <property type="project" value="UniProtKB"/>
</dbReference>
<dbReference type="GO" id="GO:0015030">
    <property type="term" value="C:Cajal body"/>
    <property type="evidence" value="ECO:0000250"/>
    <property type="project" value="UniProtKB"/>
</dbReference>
<dbReference type="GO" id="GO:0005737">
    <property type="term" value="C:cytoplasm"/>
    <property type="evidence" value="ECO:0000250"/>
    <property type="project" value="UniProtKB"/>
</dbReference>
<dbReference type="GO" id="GO:0097504">
    <property type="term" value="C:Gemini of Cajal bodies"/>
    <property type="evidence" value="ECO:0000250"/>
    <property type="project" value="UniProtKB"/>
</dbReference>
<dbReference type="GO" id="GO:0030426">
    <property type="term" value="C:growth cone"/>
    <property type="evidence" value="ECO:0000250"/>
    <property type="project" value="UniProtKB"/>
</dbReference>
<dbReference type="GO" id="GO:0043025">
    <property type="term" value="C:neuronal cell body"/>
    <property type="evidence" value="ECO:0000250"/>
    <property type="project" value="UniProtKB"/>
</dbReference>
<dbReference type="GO" id="GO:0005730">
    <property type="term" value="C:nucleolus"/>
    <property type="evidence" value="ECO:0000250"/>
    <property type="project" value="UniProtKB"/>
</dbReference>
<dbReference type="GO" id="GO:0005654">
    <property type="term" value="C:nucleoplasm"/>
    <property type="evidence" value="ECO:0000250"/>
    <property type="project" value="UniProtKB"/>
</dbReference>
<dbReference type="GO" id="GO:0005634">
    <property type="term" value="C:nucleus"/>
    <property type="evidence" value="ECO:0000250"/>
    <property type="project" value="UniProtKB"/>
</dbReference>
<dbReference type="GO" id="GO:0043204">
    <property type="term" value="C:perikaryon"/>
    <property type="evidence" value="ECO:0000250"/>
    <property type="project" value="UniProtKB"/>
</dbReference>
<dbReference type="GO" id="GO:0048471">
    <property type="term" value="C:perinuclear region of cytoplasm"/>
    <property type="evidence" value="ECO:0007669"/>
    <property type="project" value="UniProtKB-SubCell"/>
</dbReference>
<dbReference type="GO" id="GO:0044183">
    <property type="term" value="F:protein folding chaperone"/>
    <property type="evidence" value="ECO:0000250"/>
    <property type="project" value="UniProtKB"/>
</dbReference>
<dbReference type="GO" id="GO:0008270">
    <property type="term" value="F:zinc ion binding"/>
    <property type="evidence" value="ECO:0007669"/>
    <property type="project" value="UniProtKB-KW"/>
</dbReference>
<dbReference type="GO" id="GO:1902742">
    <property type="term" value="P:apoptotic process involved in development"/>
    <property type="evidence" value="ECO:0000250"/>
    <property type="project" value="UniProtKB"/>
</dbReference>
<dbReference type="GO" id="GO:0061564">
    <property type="term" value="P:axon development"/>
    <property type="evidence" value="ECO:0000250"/>
    <property type="project" value="UniProtKB"/>
</dbReference>
<dbReference type="GO" id="GO:0030576">
    <property type="term" value="P:Cajal body organization"/>
    <property type="evidence" value="ECO:0000250"/>
    <property type="project" value="UniProtKB"/>
</dbReference>
<dbReference type="GO" id="GO:0071364">
    <property type="term" value="P:cellular response to epidermal growth factor stimulus"/>
    <property type="evidence" value="ECO:0000250"/>
    <property type="project" value="UniProtKB"/>
</dbReference>
<dbReference type="GO" id="GO:0042023">
    <property type="term" value="P:DNA endoreduplication"/>
    <property type="evidence" value="ECO:0000250"/>
    <property type="project" value="UniProtKB"/>
</dbReference>
<dbReference type="GO" id="GO:0006260">
    <property type="term" value="P:DNA replication"/>
    <property type="evidence" value="ECO:0000250"/>
    <property type="project" value="UniProtKB"/>
</dbReference>
<dbReference type="GO" id="GO:0000226">
    <property type="term" value="P:microtubule cytoskeleton organization"/>
    <property type="evidence" value="ECO:0000250"/>
    <property type="project" value="UniProtKB"/>
</dbReference>
<dbReference type="GO" id="GO:0006397">
    <property type="term" value="P:mRNA processing"/>
    <property type="evidence" value="ECO:0007669"/>
    <property type="project" value="UniProtKB-KW"/>
</dbReference>
<dbReference type="GO" id="GO:2000672">
    <property type="term" value="P:negative regulation of motor neuron apoptotic process"/>
    <property type="evidence" value="ECO:0000250"/>
    <property type="project" value="UniProtKB"/>
</dbReference>
<dbReference type="GO" id="GO:0010628">
    <property type="term" value="P:positive regulation of gene expression"/>
    <property type="evidence" value="ECO:0000250"/>
    <property type="project" value="UniProtKB"/>
</dbReference>
<dbReference type="GO" id="GO:0045927">
    <property type="term" value="P:positive regulation of growth"/>
    <property type="evidence" value="ECO:0000250"/>
    <property type="project" value="UniProtKB"/>
</dbReference>
<dbReference type="GO" id="GO:0042307">
    <property type="term" value="P:positive regulation of protein import into nucleus"/>
    <property type="evidence" value="ECO:0000250"/>
    <property type="project" value="UniProtKB"/>
</dbReference>
<dbReference type="GO" id="GO:0033120">
    <property type="term" value="P:positive regulation of RNA splicing"/>
    <property type="evidence" value="ECO:0000250"/>
    <property type="project" value="UniProtKB"/>
</dbReference>
<dbReference type="GO" id="GO:1990261">
    <property type="term" value="P:pre-mRNA catabolic process"/>
    <property type="evidence" value="ECO:0000250"/>
    <property type="project" value="UniProtKB"/>
</dbReference>
<dbReference type="GO" id="GO:0006457">
    <property type="term" value="P:protein folding"/>
    <property type="evidence" value="ECO:0000250"/>
    <property type="project" value="UniProtKB"/>
</dbReference>
<dbReference type="GO" id="GO:0031641">
    <property type="term" value="P:regulation of myelination"/>
    <property type="evidence" value="ECO:0000250"/>
    <property type="project" value="UniProtKB"/>
</dbReference>
<dbReference type="GO" id="GO:0008380">
    <property type="term" value="P:RNA splicing"/>
    <property type="evidence" value="ECO:0007669"/>
    <property type="project" value="UniProtKB-KW"/>
</dbReference>
<dbReference type="GO" id="GO:0021510">
    <property type="term" value="P:spinal cord development"/>
    <property type="evidence" value="ECO:0000250"/>
    <property type="project" value="UniProtKB"/>
</dbReference>
<dbReference type="GO" id="GO:0001834">
    <property type="term" value="P:trophectodermal cell proliferation"/>
    <property type="evidence" value="ECO:0000250"/>
    <property type="project" value="UniProtKB"/>
</dbReference>
<dbReference type="FunFam" id="2.20.25.420:FF:000001">
    <property type="entry name" value="Zinc finger protein ZPR1"/>
    <property type="match status" value="1"/>
</dbReference>
<dbReference type="FunFam" id="2.60.120.1040:FF:000001">
    <property type="entry name" value="Zinc finger protein ZPR1"/>
    <property type="match status" value="1"/>
</dbReference>
<dbReference type="FunFam" id="2.20.25.420:FF:000003">
    <property type="entry name" value="zinc finger protein ZPR1"/>
    <property type="match status" value="1"/>
</dbReference>
<dbReference type="FunFam" id="2.60.120.1040:FF:000002">
    <property type="entry name" value="zinc finger protein ZPR1"/>
    <property type="match status" value="1"/>
</dbReference>
<dbReference type="Gene3D" id="2.60.120.1040">
    <property type="entry name" value="ZPR1, A/B domain"/>
    <property type="match status" value="2"/>
</dbReference>
<dbReference type="Gene3D" id="2.20.25.420">
    <property type="entry name" value="ZPR1, zinc finger domain"/>
    <property type="match status" value="2"/>
</dbReference>
<dbReference type="InterPro" id="IPR004457">
    <property type="entry name" value="Znf_ZPR1"/>
</dbReference>
<dbReference type="InterPro" id="IPR040141">
    <property type="entry name" value="ZPR1"/>
</dbReference>
<dbReference type="InterPro" id="IPR042451">
    <property type="entry name" value="ZPR1_A/B_dom"/>
</dbReference>
<dbReference type="InterPro" id="IPR056180">
    <property type="entry name" value="ZPR1_jr_dom"/>
</dbReference>
<dbReference type="InterPro" id="IPR042452">
    <property type="entry name" value="ZPR1_Znf1/2"/>
</dbReference>
<dbReference type="NCBIfam" id="TIGR00310">
    <property type="entry name" value="ZPR1_znf"/>
    <property type="match status" value="2"/>
</dbReference>
<dbReference type="PANTHER" id="PTHR10876">
    <property type="entry name" value="ZINC FINGER PROTEIN ZPR1"/>
    <property type="match status" value="1"/>
</dbReference>
<dbReference type="PANTHER" id="PTHR10876:SF0">
    <property type="entry name" value="ZINC FINGER PROTEIN ZPR1"/>
    <property type="match status" value="1"/>
</dbReference>
<dbReference type="Pfam" id="PF22794">
    <property type="entry name" value="jr-ZPR1"/>
    <property type="match status" value="2"/>
</dbReference>
<dbReference type="Pfam" id="PF03367">
    <property type="entry name" value="Zn_ribbon_ZPR1"/>
    <property type="match status" value="2"/>
</dbReference>
<dbReference type="SMART" id="SM00709">
    <property type="entry name" value="Zpr1"/>
    <property type="match status" value="2"/>
</dbReference>
<accession>Q2TBX0</accession>
<reference key="1">
    <citation type="submission" date="2005-11" db="EMBL/GenBank/DDBJ databases">
        <authorList>
            <consortium name="NIH - Mammalian Gene Collection (MGC) project"/>
        </authorList>
    </citation>
    <scope>NUCLEOTIDE SEQUENCE [LARGE SCALE MRNA]</scope>
    <source>
        <strain>Crossbred X Angus</strain>
        <tissue>Liver</tissue>
    </source>
</reference>
<keyword id="KW-0966">Cell projection</keyword>
<keyword id="KW-0963">Cytoplasm</keyword>
<keyword id="KW-0221">Differentiation</keyword>
<keyword id="KW-0479">Metal-binding</keyword>
<keyword id="KW-0507">mRNA processing</keyword>
<keyword id="KW-0508">mRNA splicing</keyword>
<keyword id="KW-0539">Nucleus</keyword>
<keyword id="KW-1185">Reference proteome</keyword>
<keyword id="KW-0677">Repeat</keyword>
<keyword id="KW-0862">Zinc</keyword>
<keyword id="KW-0863">Zinc-finger</keyword>
<organism>
    <name type="scientific">Bos taurus</name>
    <name type="common">Bovine</name>
    <dbReference type="NCBI Taxonomy" id="9913"/>
    <lineage>
        <taxon>Eukaryota</taxon>
        <taxon>Metazoa</taxon>
        <taxon>Chordata</taxon>
        <taxon>Craniata</taxon>
        <taxon>Vertebrata</taxon>
        <taxon>Euteleostomi</taxon>
        <taxon>Mammalia</taxon>
        <taxon>Eutheria</taxon>
        <taxon>Laurasiatheria</taxon>
        <taxon>Artiodactyla</taxon>
        <taxon>Ruminantia</taxon>
        <taxon>Pecora</taxon>
        <taxon>Bovidae</taxon>
        <taxon>Bovinae</taxon>
        <taxon>Bos</taxon>
    </lineage>
</organism>
<protein>
    <recommendedName>
        <fullName>Zinc finger protein ZPR1</fullName>
    </recommendedName>
    <alternativeName>
        <fullName>Zinc finger protein 259</fullName>
    </alternativeName>
</protein>
<sequence length="459" mass="51015">MSAGGAVEPGLPAAAAAPSAAPARDPGPGHLFRPISAEDEEQQPTEIESLCMNCYRNGMTRLLLTKIPFFREIIVSSFSCEHCGWNNTEIQSAGRIQDQGVRYTLTVRAQEDMDREVVKTDSATTRIPELDFEIPAFSQKGALTTVEGLISRAISGLEQDQPTRRANEEAVAERIDEFIAKLKELKQVASPFTLIIDDPSGNSFVENPHAPRKDDALVITHYNRTLQQEEMLGLQAEAPEEKPEEEDIRNEVLQFNTNCPECNAPAQTNMKLVQIPHFKEVIIMATNCENCGHRTNEVKSGGAVEPLGTRITFHITDPSDMTRDLLKSETCSVEIPELEFELGMAVLGGKFTTLEGMLKDIRELVTKNPFTLGDSSSPGQTEKLQEFSQKLDQILEGILKAHFIMDDPAGNSYLQNVYAPEDDPEMKVEHYKRTFDQNEELGLNDMKTEGYETGLPAQR</sequence>
<evidence type="ECO:0000250" key="1"/>
<evidence type="ECO:0000256" key="2">
    <source>
        <dbReference type="SAM" id="MobiDB-lite"/>
    </source>
</evidence>
<evidence type="ECO:0000305" key="3"/>
<proteinExistence type="evidence at transcript level"/>